<reference key="1">
    <citation type="journal article" date="2009" name="PLoS ONE">
        <title>Salmonella paratyphi C: genetic divergence from Salmonella choleraesuis and pathogenic convergence with Salmonella typhi.</title>
        <authorList>
            <person name="Liu W.-Q."/>
            <person name="Feng Y."/>
            <person name="Wang Y."/>
            <person name="Zou Q.-H."/>
            <person name="Chen F."/>
            <person name="Guo J.-T."/>
            <person name="Peng Y.-H."/>
            <person name="Jin Y."/>
            <person name="Li Y.-G."/>
            <person name="Hu S.-N."/>
            <person name="Johnston R.N."/>
            <person name="Liu G.-R."/>
            <person name="Liu S.-L."/>
        </authorList>
    </citation>
    <scope>NUCLEOTIDE SEQUENCE [LARGE SCALE GENOMIC DNA]</scope>
    <source>
        <strain>RKS4594</strain>
    </source>
</reference>
<feature type="chain" id="PRO_1000149629" description="Crotonobetainyl-CoA reductase">
    <location>
        <begin position="1"/>
        <end position="380"/>
    </location>
</feature>
<comment type="function">
    <text evidence="1">Catalyzes the reduction of crotonobetainyl-CoA to gamma-butyrobetainyl-CoA.</text>
</comment>
<comment type="catalytic activity">
    <reaction evidence="1">
        <text>4-(trimethylamino)butanoyl-CoA + oxidized [electron-transfer flavoprotein] + H(+) = crotonobetainyl-CoA + reduced [electron-transfer flavoprotein]</text>
        <dbReference type="Rhea" id="RHEA:51584"/>
        <dbReference type="Rhea" id="RHEA-COMP:10685"/>
        <dbReference type="Rhea" id="RHEA-COMP:10686"/>
        <dbReference type="ChEBI" id="CHEBI:15378"/>
        <dbReference type="ChEBI" id="CHEBI:57692"/>
        <dbReference type="ChEBI" id="CHEBI:58307"/>
        <dbReference type="ChEBI" id="CHEBI:60933"/>
        <dbReference type="ChEBI" id="CHEBI:61513"/>
        <dbReference type="EC" id="1.3.8.13"/>
    </reaction>
</comment>
<comment type="cofactor">
    <cofactor evidence="1">
        <name>FAD</name>
        <dbReference type="ChEBI" id="CHEBI:57692"/>
    </cofactor>
</comment>
<comment type="pathway">
    <text evidence="1">Amine and polyamine metabolism; carnitine metabolism.</text>
</comment>
<comment type="subunit">
    <text evidence="1">Homotetramer.</text>
</comment>
<comment type="subcellular location">
    <subcellularLocation>
        <location evidence="1">Cytoplasm</location>
    </subcellularLocation>
</comment>
<comment type="similarity">
    <text evidence="1">Belongs to the acyl-CoA dehydrogenase family.</text>
</comment>
<accession>C0Q4L5</accession>
<sequence length="380" mass="42481">MDFNLNDEQELFVAGIRELMASENWEAYFAECDRDSVYPERFVKALADMGIDSLLIPEEHGGLEAGFVTVAAVWMELGRLGAPTYVLYQLPGGFNTFLREGTQEQIDKIMAFRGTGKQMWNSAITEPGAGSDVGSLKTTYTRKNGKVYLNGSKCFITSSAYTPYIVVMARDGASPDKPVYTEWFVDMSKAGIKVNKLEKLGLRMDSCCEITFDDVELDEKDMFGREGNGFNRVKEEFDHERFLVALTNYGTAMCAFEDAARYANQRVQFGEAIGRFQLIQEKFAHMAIKLNSMKNMLLEAAWKADNGTITSGDAAMCKYFCANAAFEVVDTAMQVLGGVGIAGNHRITRFWRDLRVDRVSGGSDEMQILTLGRAVLKQYR</sequence>
<gene>
    <name evidence="1" type="primary">caiA</name>
    <name type="ordered locus">SPC_0078</name>
</gene>
<proteinExistence type="inferred from homology"/>
<name>CAIA_SALPC</name>
<protein>
    <recommendedName>
        <fullName evidence="1">Crotonobetainyl-CoA reductase</fullName>
        <ecNumber evidence="1">1.3.8.13</ecNumber>
    </recommendedName>
    <alternativeName>
        <fullName evidence="1">Crotonobetainyl-CoA dehydrogenase</fullName>
    </alternativeName>
</protein>
<keyword id="KW-0963">Cytoplasm</keyword>
<keyword id="KW-0274">FAD</keyword>
<keyword id="KW-0285">Flavoprotein</keyword>
<keyword id="KW-0560">Oxidoreductase</keyword>
<organism>
    <name type="scientific">Salmonella paratyphi C (strain RKS4594)</name>
    <dbReference type="NCBI Taxonomy" id="476213"/>
    <lineage>
        <taxon>Bacteria</taxon>
        <taxon>Pseudomonadati</taxon>
        <taxon>Pseudomonadota</taxon>
        <taxon>Gammaproteobacteria</taxon>
        <taxon>Enterobacterales</taxon>
        <taxon>Enterobacteriaceae</taxon>
        <taxon>Salmonella</taxon>
    </lineage>
</organism>
<evidence type="ECO:0000255" key="1">
    <source>
        <dbReference type="HAMAP-Rule" id="MF_01052"/>
    </source>
</evidence>
<dbReference type="EC" id="1.3.8.13" evidence="1"/>
<dbReference type="EMBL" id="CP000857">
    <property type="protein sequence ID" value="ACN44270.1"/>
    <property type="molecule type" value="Genomic_DNA"/>
</dbReference>
<dbReference type="RefSeq" id="WP_000347134.1">
    <property type="nucleotide sequence ID" value="NC_012125.1"/>
</dbReference>
<dbReference type="SMR" id="C0Q4L5"/>
<dbReference type="GeneID" id="44979088"/>
<dbReference type="KEGG" id="sei:SPC_0078"/>
<dbReference type="HOGENOM" id="CLU_018204_0_2_6"/>
<dbReference type="UniPathway" id="UPA00117"/>
<dbReference type="Proteomes" id="UP000001599">
    <property type="component" value="Chromosome"/>
</dbReference>
<dbReference type="GO" id="GO:0005737">
    <property type="term" value="C:cytoplasm"/>
    <property type="evidence" value="ECO:0007669"/>
    <property type="project" value="UniProtKB-SubCell"/>
</dbReference>
<dbReference type="GO" id="GO:0003995">
    <property type="term" value="F:acyl-CoA dehydrogenase activity"/>
    <property type="evidence" value="ECO:0007669"/>
    <property type="project" value="InterPro"/>
</dbReference>
<dbReference type="GO" id="GO:0050660">
    <property type="term" value="F:flavin adenine dinucleotide binding"/>
    <property type="evidence" value="ECO:0007669"/>
    <property type="project" value="InterPro"/>
</dbReference>
<dbReference type="GO" id="GO:0009437">
    <property type="term" value="P:carnitine metabolic process"/>
    <property type="evidence" value="ECO:0007669"/>
    <property type="project" value="UniProtKB-UniRule"/>
</dbReference>
<dbReference type="CDD" id="cd00567">
    <property type="entry name" value="ACAD"/>
    <property type="match status" value="1"/>
</dbReference>
<dbReference type="FunFam" id="1.20.140.10:FF:000001">
    <property type="entry name" value="Acyl-CoA dehydrogenase"/>
    <property type="match status" value="1"/>
</dbReference>
<dbReference type="FunFam" id="2.40.110.10:FF:000002">
    <property type="entry name" value="Acyl-CoA dehydrogenase fadE12"/>
    <property type="match status" value="1"/>
</dbReference>
<dbReference type="FunFam" id="1.10.540.10:FF:000005">
    <property type="entry name" value="Crotonobetainyl-CoA reductase"/>
    <property type="match status" value="1"/>
</dbReference>
<dbReference type="Gene3D" id="1.10.540.10">
    <property type="entry name" value="Acyl-CoA dehydrogenase/oxidase, N-terminal domain"/>
    <property type="match status" value="1"/>
</dbReference>
<dbReference type="Gene3D" id="2.40.110.10">
    <property type="entry name" value="Butyryl-CoA Dehydrogenase, subunit A, domain 2"/>
    <property type="match status" value="1"/>
</dbReference>
<dbReference type="Gene3D" id="1.20.140.10">
    <property type="entry name" value="Butyryl-CoA Dehydrogenase, subunit A, domain 3"/>
    <property type="match status" value="1"/>
</dbReference>
<dbReference type="HAMAP" id="MF_01052">
    <property type="entry name" value="CaiA"/>
    <property type="match status" value="1"/>
</dbReference>
<dbReference type="InterPro" id="IPR006089">
    <property type="entry name" value="Acyl-CoA_DH_CS"/>
</dbReference>
<dbReference type="InterPro" id="IPR006091">
    <property type="entry name" value="Acyl-CoA_Oxase/DH_mid-dom"/>
</dbReference>
<dbReference type="InterPro" id="IPR046373">
    <property type="entry name" value="Acyl-CoA_Oxase/DH_mid-dom_sf"/>
</dbReference>
<dbReference type="InterPro" id="IPR036250">
    <property type="entry name" value="AcylCo_DH-like_C"/>
</dbReference>
<dbReference type="InterPro" id="IPR009075">
    <property type="entry name" value="AcylCo_DH/oxidase_C"/>
</dbReference>
<dbReference type="InterPro" id="IPR013786">
    <property type="entry name" value="AcylCoA_DH/ox_N"/>
</dbReference>
<dbReference type="InterPro" id="IPR037069">
    <property type="entry name" value="AcylCoA_DH/ox_N_sf"/>
</dbReference>
<dbReference type="InterPro" id="IPR009100">
    <property type="entry name" value="AcylCoA_DH/oxidase_NM_dom_sf"/>
</dbReference>
<dbReference type="InterPro" id="IPR023450">
    <property type="entry name" value="CaiA"/>
</dbReference>
<dbReference type="NCBIfam" id="NF002885">
    <property type="entry name" value="PRK03354.1"/>
    <property type="match status" value="1"/>
</dbReference>
<dbReference type="PANTHER" id="PTHR43884">
    <property type="entry name" value="ACYL-COA DEHYDROGENASE"/>
    <property type="match status" value="1"/>
</dbReference>
<dbReference type="PANTHER" id="PTHR43884:SF12">
    <property type="entry name" value="ISOVALERYL-COA DEHYDROGENASE, MITOCHONDRIAL-RELATED"/>
    <property type="match status" value="1"/>
</dbReference>
<dbReference type="Pfam" id="PF00441">
    <property type="entry name" value="Acyl-CoA_dh_1"/>
    <property type="match status" value="1"/>
</dbReference>
<dbReference type="Pfam" id="PF02770">
    <property type="entry name" value="Acyl-CoA_dh_M"/>
    <property type="match status" value="1"/>
</dbReference>
<dbReference type="Pfam" id="PF02771">
    <property type="entry name" value="Acyl-CoA_dh_N"/>
    <property type="match status" value="1"/>
</dbReference>
<dbReference type="PIRSF" id="PIRSF016578">
    <property type="entry name" value="HsaA"/>
    <property type="match status" value="1"/>
</dbReference>
<dbReference type="SUPFAM" id="SSF47203">
    <property type="entry name" value="Acyl-CoA dehydrogenase C-terminal domain-like"/>
    <property type="match status" value="1"/>
</dbReference>
<dbReference type="SUPFAM" id="SSF56645">
    <property type="entry name" value="Acyl-CoA dehydrogenase NM domain-like"/>
    <property type="match status" value="1"/>
</dbReference>
<dbReference type="PROSITE" id="PS00072">
    <property type="entry name" value="ACYL_COA_DH_1"/>
    <property type="match status" value="1"/>
</dbReference>
<dbReference type="PROSITE" id="PS00073">
    <property type="entry name" value="ACYL_COA_DH_2"/>
    <property type="match status" value="1"/>
</dbReference>